<dbReference type="EC" id="2.1.1.166" evidence="1"/>
<dbReference type="EMBL" id="CP001144">
    <property type="protein sequence ID" value="ACH75908.1"/>
    <property type="molecule type" value="Genomic_DNA"/>
</dbReference>
<dbReference type="RefSeq" id="WP_000145974.1">
    <property type="nucleotide sequence ID" value="NC_011205.1"/>
</dbReference>
<dbReference type="SMR" id="B5FI23"/>
<dbReference type="KEGG" id="sed:SeD_A3655"/>
<dbReference type="HOGENOM" id="CLU_009422_4_0_6"/>
<dbReference type="Proteomes" id="UP000008322">
    <property type="component" value="Chromosome"/>
</dbReference>
<dbReference type="GO" id="GO:0005737">
    <property type="term" value="C:cytoplasm"/>
    <property type="evidence" value="ECO:0007669"/>
    <property type="project" value="UniProtKB-SubCell"/>
</dbReference>
<dbReference type="GO" id="GO:0008650">
    <property type="term" value="F:rRNA (uridine-2'-O-)-methyltransferase activity"/>
    <property type="evidence" value="ECO:0007669"/>
    <property type="project" value="UniProtKB-UniRule"/>
</dbReference>
<dbReference type="CDD" id="cd02440">
    <property type="entry name" value="AdoMet_MTases"/>
    <property type="match status" value="1"/>
</dbReference>
<dbReference type="FunFam" id="3.40.50.150:FF:000005">
    <property type="entry name" value="Ribosomal RNA large subunit methyltransferase E"/>
    <property type="match status" value="1"/>
</dbReference>
<dbReference type="Gene3D" id="3.40.50.150">
    <property type="entry name" value="Vaccinia Virus protein VP39"/>
    <property type="match status" value="1"/>
</dbReference>
<dbReference type="HAMAP" id="MF_01547">
    <property type="entry name" value="RNA_methyltr_E"/>
    <property type="match status" value="1"/>
</dbReference>
<dbReference type="InterPro" id="IPR050082">
    <property type="entry name" value="RNA_methyltr_RlmE"/>
</dbReference>
<dbReference type="InterPro" id="IPR002877">
    <property type="entry name" value="RNA_MeTrfase_FtsJ_dom"/>
</dbReference>
<dbReference type="InterPro" id="IPR015507">
    <property type="entry name" value="rRNA-MeTfrase_E"/>
</dbReference>
<dbReference type="InterPro" id="IPR004512">
    <property type="entry name" value="rRNA_MeTrfase_gammaproteobac"/>
</dbReference>
<dbReference type="InterPro" id="IPR029063">
    <property type="entry name" value="SAM-dependent_MTases_sf"/>
</dbReference>
<dbReference type="NCBIfam" id="NF008390">
    <property type="entry name" value="PRK11188.1"/>
    <property type="match status" value="1"/>
</dbReference>
<dbReference type="NCBIfam" id="TIGR00438">
    <property type="entry name" value="rrmJ"/>
    <property type="match status" value="1"/>
</dbReference>
<dbReference type="PANTHER" id="PTHR10920">
    <property type="entry name" value="RIBOSOMAL RNA METHYLTRANSFERASE"/>
    <property type="match status" value="1"/>
</dbReference>
<dbReference type="PANTHER" id="PTHR10920:SF18">
    <property type="entry name" value="RRNA METHYLTRANSFERASE 2, MITOCHONDRIAL"/>
    <property type="match status" value="1"/>
</dbReference>
<dbReference type="Pfam" id="PF01728">
    <property type="entry name" value="FtsJ"/>
    <property type="match status" value="1"/>
</dbReference>
<dbReference type="PIRSF" id="PIRSF005461">
    <property type="entry name" value="23S_rRNA_mtase"/>
    <property type="match status" value="1"/>
</dbReference>
<dbReference type="SUPFAM" id="SSF53335">
    <property type="entry name" value="S-adenosyl-L-methionine-dependent methyltransferases"/>
    <property type="match status" value="1"/>
</dbReference>
<accession>B5FI23</accession>
<organism>
    <name type="scientific">Salmonella dublin (strain CT_02021853)</name>
    <dbReference type="NCBI Taxonomy" id="439851"/>
    <lineage>
        <taxon>Bacteria</taxon>
        <taxon>Pseudomonadati</taxon>
        <taxon>Pseudomonadota</taxon>
        <taxon>Gammaproteobacteria</taxon>
        <taxon>Enterobacterales</taxon>
        <taxon>Enterobacteriaceae</taxon>
        <taxon>Salmonella</taxon>
    </lineage>
</organism>
<sequence length="208" mass="23238">MTGKKRSASSSRWLQEHFSDKYVQQAQKKGLRSRAWFKLDEIQQSDKLFKPGMTVVDLGAAPGGWSQYVVTQIGGKGRIIACDLLPMDPIVGVDFLQGDFRDELVMKALLERVGDSKVQVVMSDMAPNMSGTPAVDIPRAMYLVELALEMCRDVLAPGGSFVVKVFQGEGFDEYLREIRSLFTKVKVRKPDSSRARSREVYIVATGRK</sequence>
<comment type="function">
    <text evidence="1">Specifically methylates the uridine in position 2552 of 23S rRNA at the 2'-O position of the ribose in the fully assembled 50S ribosomal subunit.</text>
</comment>
<comment type="catalytic activity">
    <reaction evidence="1">
        <text>uridine(2552) in 23S rRNA + S-adenosyl-L-methionine = 2'-O-methyluridine(2552) in 23S rRNA + S-adenosyl-L-homocysteine + H(+)</text>
        <dbReference type="Rhea" id="RHEA:42720"/>
        <dbReference type="Rhea" id="RHEA-COMP:10202"/>
        <dbReference type="Rhea" id="RHEA-COMP:10203"/>
        <dbReference type="ChEBI" id="CHEBI:15378"/>
        <dbReference type="ChEBI" id="CHEBI:57856"/>
        <dbReference type="ChEBI" id="CHEBI:59789"/>
        <dbReference type="ChEBI" id="CHEBI:65315"/>
        <dbReference type="ChEBI" id="CHEBI:74478"/>
        <dbReference type="EC" id="2.1.1.166"/>
    </reaction>
</comment>
<comment type="subcellular location">
    <subcellularLocation>
        <location evidence="1">Cytoplasm</location>
    </subcellularLocation>
</comment>
<comment type="similarity">
    <text evidence="1">Belongs to the class I-like SAM-binding methyltransferase superfamily. RNA methyltransferase RlmE family.</text>
</comment>
<protein>
    <recommendedName>
        <fullName evidence="1">Ribosomal RNA large subunit methyltransferase E</fullName>
        <ecNumber evidence="1">2.1.1.166</ecNumber>
    </recommendedName>
    <alternativeName>
        <fullName evidence="1">23S rRNA Um2552 methyltransferase</fullName>
    </alternativeName>
    <alternativeName>
        <fullName evidence="1">rRNA (uridine-2'-O-)-methyltransferase</fullName>
    </alternativeName>
</protein>
<name>RLME_SALDC</name>
<proteinExistence type="inferred from homology"/>
<reference key="1">
    <citation type="journal article" date="2011" name="J. Bacteriol.">
        <title>Comparative genomics of 28 Salmonella enterica isolates: evidence for CRISPR-mediated adaptive sublineage evolution.</title>
        <authorList>
            <person name="Fricke W.F."/>
            <person name="Mammel M.K."/>
            <person name="McDermott P.F."/>
            <person name="Tartera C."/>
            <person name="White D.G."/>
            <person name="Leclerc J.E."/>
            <person name="Ravel J."/>
            <person name="Cebula T.A."/>
        </authorList>
    </citation>
    <scope>NUCLEOTIDE SEQUENCE [LARGE SCALE GENOMIC DNA]</scope>
    <source>
        <strain>CT_02021853</strain>
    </source>
</reference>
<gene>
    <name evidence="1" type="primary">rlmE</name>
    <name evidence="1" type="synonym">ftsJ</name>
    <name evidence="1" type="synonym">rrmJ</name>
    <name type="ordered locus">SeD_A3655</name>
</gene>
<evidence type="ECO:0000255" key="1">
    <source>
        <dbReference type="HAMAP-Rule" id="MF_01547"/>
    </source>
</evidence>
<keyword id="KW-0963">Cytoplasm</keyword>
<keyword id="KW-0489">Methyltransferase</keyword>
<keyword id="KW-0698">rRNA processing</keyword>
<keyword id="KW-0949">S-adenosyl-L-methionine</keyword>
<keyword id="KW-0808">Transferase</keyword>
<feature type="chain" id="PRO_1000195013" description="Ribosomal RNA large subunit methyltransferase E">
    <location>
        <begin position="1"/>
        <end position="208"/>
    </location>
</feature>
<feature type="active site" description="Proton acceptor" evidence="1">
    <location>
        <position position="164"/>
    </location>
</feature>
<feature type="binding site" evidence="1">
    <location>
        <position position="63"/>
    </location>
    <ligand>
        <name>S-adenosyl-L-methionine</name>
        <dbReference type="ChEBI" id="CHEBI:59789"/>
    </ligand>
</feature>
<feature type="binding site" evidence="1">
    <location>
        <position position="65"/>
    </location>
    <ligand>
        <name>S-adenosyl-L-methionine</name>
        <dbReference type="ChEBI" id="CHEBI:59789"/>
    </ligand>
</feature>
<feature type="binding site" evidence="1">
    <location>
        <position position="83"/>
    </location>
    <ligand>
        <name>S-adenosyl-L-methionine</name>
        <dbReference type="ChEBI" id="CHEBI:59789"/>
    </ligand>
</feature>
<feature type="binding site" evidence="1">
    <location>
        <position position="99"/>
    </location>
    <ligand>
        <name>S-adenosyl-L-methionine</name>
        <dbReference type="ChEBI" id="CHEBI:59789"/>
    </ligand>
</feature>
<feature type="binding site" evidence="1">
    <location>
        <position position="124"/>
    </location>
    <ligand>
        <name>S-adenosyl-L-methionine</name>
        <dbReference type="ChEBI" id="CHEBI:59789"/>
    </ligand>
</feature>